<reference key="1">
    <citation type="submission" date="2006-12" db="EMBL/GenBank/DDBJ databases">
        <authorList>
            <person name="Fouts D.E."/>
            <person name="Nelson K.E."/>
            <person name="Sebastian Y."/>
        </authorList>
    </citation>
    <scope>NUCLEOTIDE SEQUENCE [LARGE SCALE GENOMIC DNA]</scope>
    <source>
        <strain>81-176</strain>
    </source>
</reference>
<sequence length="112" mass="13179">MGVKAYLDGILGEDKACKFLKKQGFEILKRNFHSKFGEIDIIAKKDEILHFIEVKFTQNDYEVSERLDRKKLEKILKTIEFYHLKNGISSDFQIDLICIKNDVIQFCENISF</sequence>
<gene>
    <name type="ordered locus">CJJ81176_0184</name>
</gene>
<accession>A1VXN2</accession>
<dbReference type="EMBL" id="CP000538">
    <property type="protein sequence ID" value="EAQ73230.1"/>
    <property type="molecule type" value="Genomic_DNA"/>
</dbReference>
<dbReference type="RefSeq" id="WP_002851874.1">
    <property type="nucleotide sequence ID" value="NC_008787.1"/>
</dbReference>
<dbReference type="SMR" id="A1VXN2"/>
<dbReference type="KEGG" id="cjj:CJJ81176_0184"/>
<dbReference type="eggNOG" id="COG0792">
    <property type="taxonomic scope" value="Bacteria"/>
</dbReference>
<dbReference type="HOGENOM" id="CLU_115353_3_2_7"/>
<dbReference type="Proteomes" id="UP000000646">
    <property type="component" value="Chromosome"/>
</dbReference>
<dbReference type="GO" id="GO:0003676">
    <property type="term" value="F:nucleic acid binding"/>
    <property type="evidence" value="ECO:0007669"/>
    <property type="project" value="InterPro"/>
</dbReference>
<dbReference type="Gene3D" id="3.40.1350.10">
    <property type="match status" value="1"/>
</dbReference>
<dbReference type="HAMAP" id="MF_00048">
    <property type="entry name" value="UPF0102"/>
    <property type="match status" value="1"/>
</dbReference>
<dbReference type="InterPro" id="IPR011335">
    <property type="entry name" value="Restrct_endonuc-II-like"/>
</dbReference>
<dbReference type="InterPro" id="IPR011856">
    <property type="entry name" value="tRNA_endonuc-like_dom_sf"/>
</dbReference>
<dbReference type="InterPro" id="IPR003509">
    <property type="entry name" value="UPF0102_YraN-like"/>
</dbReference>
<dbReference type="NCBIfam" id="NF009152">
    <property type="entry name" value="PRK12497.2-4"/>
    <property type="match status" value="1"/>
</dbReference>
<dbReference type="PANTHER" id="PTHR34039">
    <property type="entry name" value="UPF0102 PROTEIN YRAN"/>
    <property type="match status" value="1"/>
</dbReference>
<dbReference type="PANTHER" id="PTHR34039:SF1">
    <property type="entry name" value="UPF0102 PROTEIN YRAN"/>
    <property type="match status" value="1"/>
</dbReference>
<dbReference type="Pfam" id="PF02021">
    <property type="entry name" value="UPF0102"/>
    <property type="match status" value="1"/>
</dbReference>
<dbReference type="SUPFAM" id="SSF52980">
    <property type="entry name" value="Restriction endonuclease-like"/>
    <property type="match status" value="1"/>
</dbReference>
<name>Y184_CAMJJ</name>
<evidence type="ECO:0000255" key="1">
    <source>
        <dbReference type="HAMAP-Rule" id="MF_00048"/>
    </source>
</evidence>
<protein>
    <recommendedName>
        <fullName evidence="1">UPF0102 protein CJJ81176_0184</fullName>
    </recommendedName>
</protein>
<organism>
    <name type="scientific">Campylobacter jejuni subsp. jejuni serotype O:23/36 (strain 81-176)</name>
    <dbReference type="NCBI Taxonomy" id="354242"/>
    <lineage>
        <taxon>Bacteria</taxon>
        <taxon>Pseudomonadati</taxon>
        <taxon>Campylobacterota</taxon>
        <taxon>Epsilonproteobacteria</taxon>
        <taxon>Campylobacterales</taxon>
        <taxon>Campylobacteraceae</taxon>
        <taxon>Campylobacter</taxon>
    </lineage>
</organism>
<proteinExistence type="inferred from homology"/>
<comment type="similarity">
    <text evidence="1">Belongs to the UPF0102 family.</text>
</comment>
<feature type="chain" id="PRO_1000009198" description="UPF0102 protein CJJ81176_0184">
    <location>
        <begin position="1"/>
        <end position="112"/>
    </location>
</feature>